<keyword id="KW-0143">Chaperone</keyword>
<keyword id="KW-0963">Cytoplasm</keyword>
<keyword id="KW-1185">Reference proteome</keyword>
<feature type="chain" id="PRO_1000212109" description="Co-chaperonin GroES">
    <location>
        <begin position="1"/>
        <end position="99"/>
    </location>
</feature>
<name>CH10_CORK4</name>
<comment type="function">
    <text evidence="1">Together with the chaperonin GroEL, plays an essential role in assisting protein folding. The GroEL-GroES system forms a nano-cage that allows encapsulation of the non-native substrate proteins and provides a physical environment optimized to promote and accelerate protein folding. GroES binds to the apical surface of the GroEL ring, thereby capping the opening of the GroEL channel.</text>
</comment>
<comment type="subunit">
    <text evidence="1">Heptamer of 7 subunits arranged in a ring. Interacts with the chaperonin GroEL.</text>
</comment>
<comment type="subcellular location">
    <subcellularLocation>
        <location evidence="1">Cytoplasm</location>
    </subcellularLocation>
</comment>
<comment type="similarity">
    <text evidence="1">Belongs to the GroES chaperonin family.</text>
</comment>
<proteinExistence type="inferred from homology"/>
<sequence>MAKVNIKPLEDKLLVQIVEAETTTASGLVIPDTAKEKPQEATVVAVGPGRTDENGKRVPMDVAEGDVVIFSKYGGTEIKYAGEEYLILSQRDVLAVVEK</sequence>
<accession>C4LKV3</accession>
<gene>
    <name evidence="1" type="primary">groES</name>
    <name evidence="1" type="synonym">groS</name>
    <name type="ordered locus">ckrop_1737</name>
</gene>
<dbReference type="EMBL" id="CP001620">
    <property type="protein sequence ID" value="ACR18458.1"/>
    <property type="molecule type" value="Genomic_DNA"/>
</dbReference>
<dbReference type="RefSeq" id="WP_012732345.1">
    <property type="nucleotide sequence ID" value="NC_012704.1"/>
</dbReference>
<dbReference type="SMR" id="C4LKV3"/>
<dbReference type="STRING" id="645127.ckrop_1737"/>
<dbReference type="GeneID" id="92726537"/>
<dbReference type="KEGG" id="ckp:ckrop_1737"/>
<dbReference type="eggNOG" id="COG0234">
    <property type="taxonomic scope" value="Bacteria"/>
</dbReference>
<dbReference type="HOGENOM" id="CLU_132825_2_0_11"/>
<dbReference type="OrthoDB" id="9806791at2"/>
<dbReference type="Proteomes" id="UP000001473">
    <property type="component" value="Chromosome"/>
</dbReference>
<dbReference type="GO" id="GO:0005737">
    <property type="term" value="C:cytoplasm"/>
    <property type="evidence" value="ECO:0007669"/>
    <property type="project" value="UniProtKB-SubCell"/>
</dbReference>
<dbReference type="GO" id="GO:0005524">
    <property type="term" value="F:ATP binding"/>
    <property type="evidence" value="ECO:0007669"/>
    <property type="project" value="InterPro"/>
</dbReference>
<dbReference type="GO" id="GO:0046872">
    <property type="term" value="F:metal ion binding"/>
    <property type="evidence" value="ECO:0007669"/>
    <property type="project" value="TreeGrafter"/>
</dbReference>
<dbReference type="GO" id="GO:0044183">
    <property type="term" value="F:protein folding chaperone"/>
    <property type="evidence" value="ECO:0007669"/>
    <property type="project" value="InterPro"/>
</dbReference>
<dbReference type="GO" id="GO:0051087">
    <property type="term" value="F:protein-folding chaperone binding"/>
    <property type="evidence" value="ECO:0007669"/>
    <property type="project" value="TreeGrafter"/>
</dbReference>
<dbReference type="GO" id="GO:0051082">
    <property type="term" value="F:unfolded protein binding"/>
    <property type="evidence" value="ECO:0007669"/>
    <property type="project" value="TreeGrafter"/>
</dbReference>
<dbReference type="GO" id="GO:0051085">
    <property type="term" value="P:chaperone cofactor-dependent protein refolding"/>
    <property type="evidence" value="ECO:0007669"/>
    <property type="project" value="TreeGrafter"/>
</dbReference>
<dbReference type="CDD" id="cd00320">
    <property type="entry name" value="cpn10"/>
    <property type="match status" value="1"/>
</dbReference>
<dbReference type="FunFam" id="2.30.33.40:FF:000001">
    <property type="entry name" value="10 kDa chaperonin"/>
    <property type="match status" value="1"/>
</dbReference>
<dbReference type="Gene3D" id="2.30.33.40">
    <property type="entry name" value="GroES chaperonin"/>
    <property type="match status" value="1"/>
</dbReference>
<dbReference type="HAMAP" id="MF_00580">
    <property type="entry name" value="CH10"/>
    <property type="match status" value="1"/>
</dbReference>
<dbReference type="InterPro" id="IPR020818">
    <property type="entry name" value="Chaperonin_GroES"/>
</dbReference>
<dbReference type="InterPro" id="IPR037124">
    <property type="entry name" value="Chaperonin_GroES_sf"/>
</dbReference>
<dbReference type="InterPro" id="IPR018369">
    <property type="entry name" value="Chaprnonin_Cpn10_CS"/>
</dbReference>
<dbReference type="InterPro" id="IPR011032">
    <property type="entry name" value="GroES-like_sf"/>
</dbReference>
<dbReference type="NCBIfam" id="NF001530">
    <property type="entry name" value="PRK00364.1-6"/>
    <property type="match status" value="1"/>
</dbReference>
<dbReference type="NCBIfam" id="NF001531">
    <property type="entry name" value="PRK00364.2-2"/>
    <property type="match status" value="1"/>
</dbReference>
<dbReference type="NCBIfam" id="NF001533">
    <property type="entry name" value="PRK00364.2-4"/>
    <property type="match status" value="1"/>
</dbReference>
<dbReference type="NCBIfam" id="NF001534">
    <property type="entry name" value="PRK00364.2-5"/>
    <property type="match status" value="1"/>
</dbReference>
<dbReference type="PANTHER" id="PTHR10772">
    <property type="entry name" value="10 KDA HEAT SHOCK PROTEIN"/>
    <property type="match status" value="1"/>
</dbReference>
<dbReference type="PANTHER" id="PTHR10772:SF58">
    <property type="entry name" value="CO-CHAPERONIN GROES"/>
    <property type="match status" value="1"/>
</dbReference>
<dbReference type="Pfam" id="PF00166">
    <property type="entry name" value="Cpn10"/>
    <property type="match status" value="1"/>
</dbReference>
<dbReference type="PRINTS" id="PR00297">
    <property type="entry name" value="CHAPERONIN10"/>
</dbReference>
<dbReference type="SMART" id="SM00883">
    <property type="entry name" value="Cpn10"/>
    <property type="match status" value="1"/>
</dbReference>
<dbReference type="SUPFAM" id="SSF50129">
    <property type="entry name" value="GroES-like"/>
    <property type="match status" value="1"/>
</dbReference>
<dbReference type="PROSITE" id="PS00681">
    <property type="entry name" value="CHAPERONINS_CPN10"/>
    <property type="match status" value="1"/>
</dbReference>
<reference key="1">
    <citation type="journal article" date="2008" name="J. Biotechnol.">
        <title>Ultrafast pyrosequencing of Corynebacterium kroppenstedtii DSM44385 revealed insights into the physiology of a lipophilic corynebacterium that lacks mycolic acids.</title>
        <authorList>
            <person name="Tauch A."/>
            <person name="Schneider J."/>
            <person name="Szczepanowski R."/>
            <person name="Tilker A."/>
            <person name="Viehoever P."/>
            <person name="Gartemann K.-H."/>
            <person name="Arnold W."/>
            <person name="Blom J."/>
            <person name="Brinkrolf K."/>
            <person name="Brune I."/>
            <person name="Goetker S."/>
            <person name="Weisshaar B."/>
            <person name="Goesmann A."/>
            <person name="Droege M."/>
            <person name="Puehler A."/>
        </authorList>
    </citation>
    <scope>NUCLEOTIDE SEQUENCE [LARGE SCALE GENOMIC DNA]</scope>
    <source>
        <strain>DSM 44385 / JCM 11950 / CIP 105744 / CCUG 35717</strain>
    </source>
</reference>
<evidence type="ECO:0000255" key="1">
    <source>
        <dbReference type="HAMAP-Rule" id="MF_00580"/>
    </source>
</evidence>
<protein>
    <recommendedName>
        <fullName evidence="1">Co-chaperonin GroES</fullName>
    </recommendedName>
    <alternativeName>
        <fullName evidence="1">10 kDa chaperonin</fullName>
    </alternativeName>
    <alternativeName>
        <fullName evidence="1">Chaperonin-10</fullName>
        <shortName evidence="1">Cpn10</shortName>
    </alternativeName>
</protein>
<organism>
    <name type="scientific">Corynebacterium kroppenstedtii (strain DSM 44385 / JCM 11950 / CIP 105744 / CCUG 35717)</name>
    <dbReference type="NCBI Taxonomy" id="645127"/>
    <lineage>
        <taxon>Bacteria</taxon>
        <taxon>Bacillati</taxon>
        <taxon>Actinomycetota</taxon>
        <taxon>Actinomycetes</taxon>
        <taxon>Mycobacteriales</taxon>
        <taxon>Corynebacteriaceae</taxon>
        <taxon>Corynebacterium</taxon>
    </lineage>
</organism>